<evidence type="ECO:0000250" key="1"/>
<evidence type="ECO:0000305" key="2"/>
<sequence length="519" mass="55830">MVLEPQIKSQLNQYLQLMEGDVLLKVSAGNDKVSEDMLSLVDELASMSSRITVEKTNLERTPSFSVNRPGEDTGIVFAGIPLGHEFTSLVLALLQVSGRAPKAEQNVIDQIKNIEGEYHFESYISLSCQNCPDVVQALNLMSVLNPGISHTMIDGAAFKDEVESKDIMAVPTVYLNGESFTSGRMTVEEILAQLGSGPDASELADKDPFDVLVVGGGPAGASSAIYAARKGIRTGIVADRFGGQIMDTLSIENFISQKYTEGPKLAASLEEHVKEYDIDVMKLQRAKRLEKKDLIEIELENGAVLKSKSVILSTGARWRNVGVPGEQEFKNKGVAYCPHCDGPLFEGKDVAVIGGGNSGVEAAIDLAGIVNHVTVLEFMPELKADEVLQERLNSLPNVTVIKNAQTKEITGDDKVNGISYMDRDTEEVHHIELAGVFVQIGLVPNTDWLDGTLERNRFGEIVVDSHGATNVPGVFAAGDCTNSAYKQIIISMGSGATAALGAFDYLIRNTTPAESAAAK</sequence>
<feature type="chain" id="PRO_0000166788" description="NADH dehydrogenase">
    <location>
        <begin position="1"/>
        <end position="519"/>
    </location>
</feature>
<feature type="region of interest" description="Membrane-binding">
    <location>
        <begin position="1"/>
        <end position="183" status="uncertain"/>
    </location>
</feature>
<feature type="region of interest" description="Catalytic">
    <location>
        <begin position="184" status="uncertain"/>
        <end position="519"/>
    </location>
</feature>
<feature type="binding site" evidence="1">
    <location>
        <begin position="210"/>
        <end position="241"/>
    </location>
    <ligand>
        <name>FAD</name>
        <dbReference type="ChEBI" id="CHEBI:57692"/>
    </ligand>
</feature>
<feature type="binding site" evidence="1">
    <location>
        <begin position="349"/>
        <end position="379"/>
    </location>
    <ligand>
        <name>NAD(+)</name>
        <dbReference type="ChEBI" id="CHEBI:57540"/>
    </ligand>
</feature>
<feature type="binding site" evidence="1">
    <location>
        <begin position="469"/>
        <end position="479"/>
    </location>
    <ligand>
        <name>FAD</name>
        <dbReference type="ChEBI" id="CHEBI:57692"/>
    </ligand>
</feature>
<feature type="disulfide bond" description="Redox-active" evidence="1">
    <location>
        <begin position="337"/>
        <end position="340"/>
    </location>
</feature>
<dbReference type="EC" id="7.1.1.2"/>
<dbReference type="EMBL" id="D10701">
    <property type="protein sequence ID" value="BAA01545.1"/>
    <property type="molecule type" value="Genomic_DNA"/>
</dbReference>
<dbReference type="SMR" id="P26829"/>
<dbReference type="GO" id="GO:0005886">
    <property type="term" value="C:plasma membrane"/>
    <property type="evidence" value="ECO:0007669"/>
    <property type="project" value="UniProtKB-SubCell"/>
</dbReference>
<dbReference type="GO" id="GO:0050660">
    <property type="term" value="F:flavin adenine dinucleotide binding"/>
    <property type="evidence" value="ECO:0007669"/>
    <property type="project" value="InterPro"/>
</dbReference>
<dbReference type="GO" id="GO:0051287">
    <property type="term" value="F:NAD binding"/>
    <property type="evidence" value="ECO:0007669"/>
    <property type="project" value="InterPro"/>
</dbReference>
<dbReference type="GO" id="GO:0008137">
    <property type="term" value="F:NADH dehydrogenase (ubiquinone) activity"/>
    <property type="evidence" value="ECO:0007669"/>
    <property type="project" value="UniProtKB-EC"/>
</dbReference>
<dbReference type="GO" id="GO:0102039">
    <property type="term" value="F:NADH-dependent peroxiredoxin activity"/>
    <property type="evidence" value="ECO:0007669"/>
    <property type="project" value="InterPro"/>
</dbReference>
<dbReference type="GO" id="GO:0016668">
    <property type="term" value="F:oxidoreductase activity, acting on a sulfur group of donors, NAD(P) as acceptor"/>
    <property type="evidence" value="ECO:0007669"/>
    <property type="project" value="UniProtKB-ARBA"/>
</dbReference>
<dbReference type="GO" id="GO:0000302">
    <property type="term" value="P:response to reactive oxygen species"/>
    <property type="evidence" value="ECO:0007669"/>
    <property type="project" value="InterPro"/>
</dbReference>
<dbReference type="CDD" id="cd03026">
    <property type="entry name" value="AhpF_NTD_C"/>
    <property type="match status" value="1"/>
</dbReference>
<dbReference type="CDD" id="cd02974">
    <property type="entry name" value="AhpF_NTD_N"/>
    <property type="match status" value="1"/>
</dbReference>
<dbReference type="FunFam" id="3.50.50.60:FF:000007">
    <property type="entry name" value="Alkyl hydroperoxide reductase, F subunit"/>
    <property type="match status" value="1"/>
</dbReference>
<dbReference type="Gene3D" id="3.40.30.80">
    <property type="match status" value="1"/>
</dbReference>
<dbReference type="Gene3D" id="3.50.50.60">
    <property type="entry name" value="FAD/NAD(P)-binding domain"/>
    <property type="match status" value="2"/>
</dbReference>
<dbReference type="InterPro" id="IPR044141">
    <property type="entry name" value="AhpF_NTD_C"/>
</dbReference>
<dbReference type="InterPro" id="IPR044142">
    <property type="entry name" value="AhpF_NTD_N"/>
</dbReference>
<dbReference type="InterPro" id="IPR012081">
    <property type="entry name" value="Alkyl_hydroperoxide_Rdtase_suF"/>
</dbReference>
<dbReference type="InterPro" id="IPR036188">
    <property type="entry name" value="FAD/NAD-bd_sf"/>
</dbReference>
<dbReference type="InterPro" id="IPR023753">
    <property type="entry name" value="FAD/NAD-binding_dom"/>
</dbReference>
<dbReference type="InterPro" id="IPR050097">
    <property type="entry name" value="Ferredoxin-NADP_redctase_2"/>
</dbReference>
<dbReference type="InterPro" id="IPR008255">
    <property type="entry name" value="Pyr_nucl-diS_OxRdtase_2_AS"/>
</dbReference>
<dbReference type="InterPro" id="IPR012336">
    <property type="entry name" value="Thioredoxin-like_fold"/>
</dbReference>
<dbReference type="InterPro" id="IPR036249">
    <property type="entry name" value="Thioredoxin-like_sf"/>
</dbReference>
<dbReference type="NCBIfam" id="TIGR03140">
    <property type="entry name" value="AhpF"/>
    <property type="match status" value="1"/>
</dbReference>
<dbReference type="PANTHER" id="PTHR48105">
    <property type="entry name" value="THIOREDOXIN REDUCTASE 1-RELATED-RELATED"/>
    <property type="match status" value="1"/>
</dbReference>
<dbReference type="Pfam" id="PF07992">
    <property type="entry name" value="Pyr_redox_2"/>
    <property type="match status" value="1"/>
</dbReference>
<dbReference type="Pfam" id="PF13192">
    <property type="entry name" value="Thioredoxin_3"/>
    <property type="match status" value="1"/>
</dbReference>
<dbReference type="PIRSF" id="PIRSF000238">
    <property type="entry name" value="AhpF"/>
    <property type="match status" value="1"/>
</dbReference>
<dbReference type="PRINTS" id="PR00368">
    <property type="entry name" value="FADPNR"/>
</dbReference>
<dbReference type="PRINTS" id="PR00469">
    <property type="entry name" value="PNDRDTASEII"/>
</dbReference>
<dbReference type="SUPFAM" id="SSF51905">
    <property type="entry name" value="FAD/NAD(P)-binding domain"/>
    <property type="match status" value="1"/>
</dbReference>
<dbReference type="SUPFAM" id="SSF52833">
    <property type="entry name" value="Thioredoxin-like"/>
    <property type="match status" value="2"/>
</dbReference>
<dbReference type="PROSITE" id="PS51354">
    <property type="entry name" value="GLUTAREDOXIN_2"/>
    <property type="match status" value="1"/>
</dbReference>
<dbReference type="PROSITE" id="PS00573">
    <property type="entry name" value="PYRIDINE_REDOX_2"/>
    <property type="match status" value="1"/>
</dbReference>
<proteinExistence type="evidence at protein level"/>
<reference key="1">
    <citation type="journal article" date="1991" name="J. Biochem.">
        <title>Nucleotide sequence of the gene encoding NADH dehydrogenase from an alkalophile, Bacillus sp. strain YN-1.</title>
        <authorList>
            <person name="Xu X."/>
            <person name="Koyama N."/>
            <person name="Cui M."/>
            <person name="Yamagishi A."/>
            <person name="Nosoh Y."/>
            <person name="Oshima T."/>
        </authorList>
    </citation>
    <scope>NUCLEOTIDE SEQUENCE [GENOMIC DNA]</scope>
</reference>
<reference key="2">
    <citation type="journal article" date="1989" name="J. Biochem.">
        <title>Tryptic digestion of NADH dehydrogenase from alkalophilic Bacillus.</title>
        <authorList>
            <person name="Xu X."/>
            <person name="Kanaya S."/>
            <person name="Koyama N."/>
            <person name="Sekiguchi T."/>
            <person name="Nosoh Y."/>
            <person name="Ohashi S."/>
            <person name="Tsuda K."/>
        </authorList>
    </citation>
    <scope>PARTIAL PROTEIN SEQUENCE</scope>
</reference>
<keyword id="KW-1003">Cell membrane</keyword>
<keyword id="KW-0903">Direct protein sequencing</keyword>
<keyword id="KW-1015">Disulfide bond</keyword>
<keyword id="KW-0249">Electron transport</keyword>
<keyword id="KW-0274">FAD</keyword>
<keyword id="KW-0285">Flavoprotein</keyword>
<keyword id="KW-0472">Membrane</keyword>
<keyword id="KW-0520">NAD</keyword>
<keyword id="KW-0560">Oxidoreductase</keyword>
<keyword id="KW-0676">Redox-active center</keyword>
<keyword id="KW-1278">Translocase</keyword>
<keyword id="KW-0813">Transport</keyword>
<keyword id="KW-0830">Ubiquinone</keyword>
<name>DHNA_FERAY</name>
<comment type="function">
    <text>Transfer of electrons from NADH to the respiratory chain. The immediate electron acceptor for the enzyme is believed to be ubiquinone.</text>
</comment>
<comment type="catalytic activity">
    <reaction>
        <text>a ubiquinone + NADH + 5 H(+)(in) = a ubiquinol + NAD(+) + 4 H(+)(out)</text>
        <dbReference type="Rhea" id="RHEA:29091"/>
        <dbReference type="Rhea" id="RHEA-COMP:9565"/>
        <dbReference type="Rhea" id="RHEA-COMP:9566"/>
        <dbReference type="ChEBI" id="CHEBI:15378"/>
        <dbReference type="ChEBI" id="CHEBI:16389"/>
        <dbReference type="ChEBI" id="CHEBI:17976"/>
        <dbReference type="ChEBI" id="CHEBI:57540"/>
        <dbReference type="ChEBI" id="CHEBI:57945"/>
        <dbReference type="EC" id="7.1.1.2"/>
    </reaction>
</comment>
<comment type="cofactor">
    <cofactor evidence="1">
        <name>FAD</name>
        <dbReference type="ChEBI" id="CHEBI:57692"/>
    </cofactor>
    <text evidence="1">Binds 1 FAD per subunit.</text>
</comment>
<comment type="subunit">
    <text>Homodimer.</text>
</comment>
<comment type="subcellular location">
    <subcellularLocation>
        <location>Cell membrane</location>
        <topology>Peripheral membrane protein</topology>
    </subcellularLocation>
</comment>
<comment type="similarity">
    <text evidence="2">Belongs to the class-II pyridine nucleotide-disulfide oxidoreductase family.</text>
</comment>
<organism>
    <name type="scientific">Ferdinandcohnia aciditolerans (strain JCM 32973 / CCTCC AB 2017280 / YN-1)</name>
    <name type="common">Bacillus aciditolerans</name>
    <dbReference type="NCBI Taxonomy" id="72581"/>
    <lineage>
        <taxon>Bacteria</taxon>
        <taxon>Bacillati</taxon>
        <taxon>Bacillota</taxon>
        <taxon>Bacilli</taxon>
        <taxon>Bacillales</taxon>
        <taxon>Bacillaceae</taxon>
        <taxon>Fredinandcohnia</taxon>
    </lineage>
</organism>
<protein>
    <recommendedName>
        <fullName>NADH dehydrogenase</fullName>
        <ecNumber>7.1.1.2</ecNumber>
    </recommendedName>
    <alternativeName>
        <fullName>Alkyl hydroperoxide reductase</fullName>
    </alternativeName>
</protein>
<accession>P26829</accession>
<gene>
    <name type="primary">ahpF</name>
    <name type="synonym">ndh</name>
</gene>